<protein>
    <recommendedName>
        <fullName evidence="1">UvrABC system protein B</fullName>
        <shortName evidence="1">Protein UvrB</shortName>
    </recommendedName>
    <alternativeName>
        <fullName evidence="1">Excinuclease ABC subunit B</fullName>
    </alternativeName>
</protein>
<dbReference type="EMBL" id="AM942759">
    <property type="protein sequence ID" value="CAR41446.1"/>
    <property type="molecule type" value="Genomic_DNA"/>
</dbReference>
<dbReference type="RefSeq" id="WP_004247566.1">
    <property type="nucleotide sequence ID" value="NC_010554.1"/>
</dbReference>
<dbReference type="SMR" id="B4ESU7"/>
<dbReference type="EnsemblBacteria" id="CAR41446">
    <property type="protein sequence ID" value="CAR41446"/>
    <property type="gene ID" value="PMI0607"/>
</dbReference>
<dbReference type="GeneID" id="6800806"/>
<dbReference type="KEGG" id="pmr:PMI0607"/>
<dbReference type="eggNOG" id="COG0556">
    <property type="taxonomic scope" value="Bacteria"/>
</dbReference>
<dbReference type="HOGENOM" id="CLU_009621_2_1_6"/>
<dbReference type="Proteomes" id="UP000008319">
    <property type="component" value="Chromosome"/>
</dbReference>
<dbReference type="GO" id="GO:0005737">
    <property type="term" value="C:cytoplasm"/>
    <property type="evidence" value="ECO:0007669"/>
    <property type="project" value="UniProtKB-SubCell"/>
</dbReference>
<dbReference type="GO" id="GO:0009380">
    <property type="term" value="C:excinuclease repair complex"/>
    <property type="evidence" value="ECO:0007669"/>
    <property type="project" value="InterPro"/>
</dbReference>
<dbReference type="GO" id="GO:0005524">
    <property type="term" value="F:ATP binding"/>
    <property type="evidence" value="ECO:0007669"/>
    <property type="project" value="UniProtKB-UniRule"/>
</dbReference>
<dbReference type="GO" id="GO:0016887">
    <property type="term" value="F:ATP hydrolysis activity"/>
    <property type="evidence" value="ECO:0007669"/>
    <property type="project" value="InterPro"/>
</dbReference>
<dbReference type="GO" id="GO:0003677">
    <property type="term" value="F:DNA binding"/>
    <property type="evidence" value="ECO:0007669"/>
    <property type="project" value="UniProtKB-UniRule"/>
</dbReference>
<dbReference type="GO" id="GO:0009381">
    <property type="term" value="F:excinuclease ABC activity"/>
    <property type="evidence" value="ECO:0007669"/>
    <property type="project" value="UniProtKB-UniRule"/>
</dbReference>
<dbReference type="GO" id="GO:0004386">
    <property type="term" value="F:helicase activity"/>
    <property type="evidence" value="ECO:0007669"/>
    <property type="project" value="UniProtKB-KW"/>
</dbReference>
<dbReference type="GO" id="GO:0006289">
    <property type="term" value="P:nucleotide-excision repair"/>
    <property type="evidence" value="ECO:0007669"/>
    <property type="project" value="UniProtKB-UniRule"/>
</dbReference>
<dbReference type="GO" id="GO:0009432">
    <property type="term" value="P:SOS response"/>
    <property type="evidence" value="ECO:0007669"/>
    <property type="project" value="UniProtKB-UniRule"/>
</dbReference>
<dbReference type="CDD" id="cd17916">
    <property type="entry name" value="DEXHc_UvrB"/>
    <property type="match status" value="1"/>
</dbReference>
<dbReference type="CDD" id="cd18790">
    <property type="entry name" value="SF2_C_UvrB"/>
    <property type="match status" value="1"/>
</dbReference>
<dbReference type="FunFam" id="3.40.50.300:FF:000257">
    <property type="entry name" value="UvrABC system protein B"/>
    <property type="match status" value="1"/>
</dbReference>
<dbReference type="FunFam" id="3.40.50.300:FF:000401">
    <property type="entry name" value="UvrABC system protein B"/>
    <property type="match status" value="1"/>
</dbReference>
<dbReference type="FunFam" id="3.40.50.300:FF:000477">
    <property type="entry name" value="UvrABC system protein B"/>
    <property type="match status" value="1"/>
</dbReference>
<dbReference type="Gene3D" id="3.40.50.300">
    <property type="entry name" value="P-loop containing nucleotide triphosphate hydrolases"/>
    <property type="match status" value="3"/>
</dbReference>
<dbReference type="Gene3D" id="4.10.860.10">
    <property type="entry name" value="UVR domain"/>
    <property type="match status" value="1"/>
</dbReference>
<dbReference type="HAMAP" id="MF_00204">
    <property type="entry name" value="UvrB"/>
    <property type="match status" value="1"/>
</dbReference>
<dbReference type="InterPro" id="IPR006935">
    <property type="entry name" value="Helicase/UvrB_N"/>
</dbReference>
<dbReference type="InterPro" id="IPR014001">
    <property type="entry name" value="Helicase_ATP-bd"/>
</dbReference>
<dbReference type="InterPro" id="IPR001650">
    <property type="entry name" value="Helicase_C-like"/>
</dbReference>
<dbReference type="InterPro" id="IPR027417">
    <property type="entry name" value="P-loop_NTPase"/>
</dbReference>
<dbReference type="InterPro" id="IPR001943">
    <property type="entry name" value="UVR_dom"/>
</dbReference>
<dbReference type="InterPro" id="IPR036876">
    <property type="entry name" value="UVR_dom_sf"/>
</dbReference>
<dbReference type="InterPro" id="IPR004807">
    <property type="entry name" value="UvrB"/>
</dbReference>
<dbReference type="InterPro" id="IPR041471">
    <property type="entry name" value="UvrB_inter"/>
</dbReference>
<dbReference type="InterPro" id="IPR024759">
    <property type="entry name" value="UvrB_YAD/RRR_dom"/>
</dbReference>
<dbReference type="NCBIfam" id="NF003673">
    <property type="entry name" value="PRK05298.1"/>
    <property type="match status" value="1"/>
</dbReference>
<dbReference type="NCBIfam" id="TIGR00631">
    <property type="entry name" value="uvrb"/>
    <property type="match status" value="1"/>
</dbReference>
<dbReference type="PANTHER" id="PTHR24029">
    <property type="entry name" value="UVRABC SYSTEM PROTEIN B"/>
    <property type="match status" value="1"/>
</dbReference>
<dbReference type="PANTHER" id="PTHR24029:SF0">
    <property type="entry name" value="UVRABC SYSTEM PROTEIN B"/>
    <property type="match status" value="1"/>
</dbReference>
<dbReference type="Pfam" id="PF00271">
    <property type="entry name" value="Helicase_C"/>
    <property type="match status" value="1"/>
</dbReference>
<dbReference type="Pfam" id="PF04851">
    <property type="entry name" value="ResIII"/>
    <property type="match status" value="1"/>
</dbReference>
<dbReference type="Pfam" id="PF02151">
    <property type="entry name" value="UVR"/>
    <property type="match status" value="1"/>
</dbReference>
<dbReference type="Pfam" id="PF12344">
    <property type="entry name" value="UvrB"/>
    <property type="match status" value="1"/>
</dbReference>
<dbReference type="Pfam" id="PF17757">
    <property type="entry name" value="UvrB_inter"/>
    <property type="match status" value="1"/>
</dbReference>
<dbReference type="SMART" id="SM00487">
    <property type="entry name" value="DEXDc"/>
    <property type="match status" value="1"/>
</dbReference>
<dbReference type="SMART" id="SM00490">
    <property type="entry name" value="HELICc"/>
    <property type="match status" value="1"/>
</dbReference>
<dbReference type="SUPFAM" id="SSF46600">
    <property type="entry name" value="C-terminal UvrC-binding domain of UvrB"/>
    <property type="match status" value="1"/>
</dbReference>
<dbReference type="SUPFAM" id="SSF52540">
    <property type="entry name" value="P-loop containing nucleoside triphosphate hydrolases"/>
    <property type="match status" value="2"/>
</dbReference>
<dbReference type="PROSITE" id="PS51192">
    <property type="entry name" value="HELICASE_ATP_BIND_1"/>
    <property type="match status" value="1"/>
</dbReference>
<dbReference type="PROSITE" id="PS51194">
    <property type="entry name" value="HELICASE_CTER"/>
    <property type="match status" value="1"/>
</dbReference>
<dbReference type="PROSITE" id="PS50151">
    <property type="entry name" value="UVR"/>
    <property type="match status" value="1"/>
</dbReference>
<proteinExistence type="inferred from homology"/>
<comment type="function">
    <text evidence="1">The UvrABC repair system catalyzes the recognition and processing of DNA lesions. A damage recognition complex composed of 2 UvrA and 2 UvrB subunits scans DNA for abnormalities. Upon binding of the UvrA(2)B(2) complex to a putative damaged site, the DNA wraps around one UvrB monomer. DNA wrap is dependent on ATP binding by UvrB and probably causes local melting of the DNA helix, facilitating insertion of UvrB beta-hairpin between the DNA strands. Then UvrB probes one DNA strand for the presence of a lesion. If a lesion is found the UvrA subunits dissociate and the UvrB-DNA preincision complex is formed. This complex is subsequently bound by UvrC and the second UvrB is released. If no lesion is found, the DNA wraps around the other UvrB subunit that will check the other stand for damage.</text>
</comment>
<comment type="subunit">
    <text evidence="1">Forms a heterotetramer with UvrA during the search for lesions. Interacts with UvrC in an incision complex.</text>
</comment>
<comment type="subcellular location">
    <subcellularLocation>
        <location evidence="1">Cytoplasm</location>
    </subcellularLocation>
</comment>
<comment type="domain">
    <text evidence="1">The beta-hairpin motif is involved in DNA binding.</text>
</comment>
<comment type="similarity">
    <text evidence="1">Belongs to the UvrB family.</text>
</comment>
<evidence type="ECO:0000255" key="1">
    <source>
        <dbReference type="HAMAP-Rule" id="MF_00204"/>
    </source>
</evidence>
<gene>
    <name evidence="1" type="primary">uvrB</name>
    <name type="ordered locus">PMI0607</name>
</gene>
<name>UVRB_PROMH</name>
<keyword id="KW-0067">ATP-binding</keyword>
<keyword id="KW-0963">Cytoplasm</keyword>
<keyword id="KW-0227">DNA damage</keyword>
<keyword id="KW-0228">DNA excision</keyword>
<keyword id="KW-0234">DNA repair</keyword>
<keyword id="KW-0267">Excision nuclease</keyword>
<keyword id="KW-0347">Helicase</keyword>
<keyword id="KW-0378">Hydrolase</keyword>
<keyword id="KW-0547">Nucleotide-binding</keyword>
<keyword id="KW-1185">Reference proteome</keyword>
<keyword id="KW-0742">SOS response</keyword>
<reference key="1">
    <citation type="journal article" date="2008" name="J. Bacteriol.">
        <title>Complete genome sequence of uropathogenic Proteus mirabilis, a master of both adherence and motility.</title>
        <authorList>
            <person name="Pearson M.M."/>
            <person name="Sebaihia M."/>
            <person name="Churcher C."/>
            <person name="Quail M.A."/>
            <person name="Seshasayee A.S."/>
            <person name="Luscombe N.M."/>
            <person name="Abdellah Z."/>
            <person name="Arrosmith C."/>
            <person name="Atkin B."/>
            <person name="Chillingworth T."/>
            <person name="Hauser H."/>
            <person name="Jagels K."/>
            <person name="Moule S."/>
            <person name="Mungall K."/>
            <person name="Norbertczak H."/>
            <person name="Rabbinowitsch E."/>
            <person name="Walker D."/>
            <person name="Whithead S."/>
            <person name="Thomson N.R."/>
            <person name="Rather P.N."/>
            <person name="Parkhill J."/>
            <person name="Mobley H.L.T."/>
        </authorList>
    </citation>
    <scope>NUCLEOTIDE SEQUENCE [LARGE SCALE GENOMIC DNA]</scope>
    <source>
        <strain>HI4320</strain>
    </source>
</reference>
<sequence length="669" mass="76029">MSKVFKLHSEFKPGGDQPTAIASLCEGLEDGLAHQTLLGVTGSGKTFTIANVIANLNRPTMVLAPNKTLAAQLYSEMKEFFPENAVEYFVSYYDYYQPEAYVPSSDTFIEKDASVNEHIEQMRLSATKALLERKDVIVVSSVSAIYGLGDPDSYLKMMLHLSNGMIIDQRAILRRLADLQYTRNDQAFQRGTFRVRGEVIDIFPAESDDYALRVELFDEEVERLSLFDPLTGQIHYNVPRFTVYPKTHYVTPRERILDAMEKIKQELAERRKVLLANDKLVEEQRVTQRTQFDLEMMNELGYCSGIENYSRYLSGRGPGEPPPTLFDYLPADGLLVIDESHVTIPQIGGMYKGDRSRKETLVEYGFRLPSALDNRPLRFEEFEALAPQTIYVSATPGKYELEKSGNDIVEQVVRPTGLLDPVVEVRPVATQVDDLLSEIRIRAAKNERVLVTTLTKRMAEDLTEYLEEHGERVRYLHSDIDTVERVEIIRDLRLGEFDVLVGINLLREGLDMPEVSLVAILDADKEGFLRSERSLIQTIGRAARNLEGKAILYGDKITDSMAKAIGETERRREKQQQFNLEHGIVPKGLNKKIGDILKIGQPTQGRNKKGHKAVDTHEDYPLLSTAELEKEIQRLETEMYQHAKDLEFEKAAQTRDKLQTLRAQFIANS</sequence>
<feature type="chain" id="PRO_1000099559" description="UvrABC system protein B">
    <location>
        <begin position="1"/>
        <end position="669"/>
    </location>
</feature>
<feature type="domain" description="Helicase ATP-binding" evidence="1">
    <location>
        <begin position="26"/>
        <end position="183"/>
    </location>
</feature>
<feature type="domain" description="Helicase C-terminal" evidence="1">
    <location>
        <begin position="431"/>
        <end position="593"/>
    </location>
</feature>
<feature type="domain" description="UVR" evidence="1">
    <location>
        <begin position="629"/>
        <end position="664"/>
    </location>
</feature>
<feature type="short sequence motif" description="Beta-hairpin">
    <location>
        <begin position="92"/>
        <end position="115"/>
    </location>
</feature>
<feature type="binding site" evidence="1">
    <location>
        <begin position="39"/>
        <end position="46"/>
    </location>
    <ligand>
        <name>ATP</name>
        <dbReference type="ChEBI" id="CHEBI:30616"/>
    </ligand>
</feature>
<organism>
    <name type="scientific">Proteus mirabilis (strain HI4320)</name>
    <dbReference type="NCBI Taxonomy" id="529507"/>
    <lineage>
        <taxon>Bacteria</taxon>
        <taxon>Pseudomonadati</taxon>
        <taxon>Pseudomonadota</taxon>
        <taxon>Gammaproteobacteria</taxon>
        <taxon>Enterobacterales</taxon>
        <taxon>Morganellaceae</taxon>
        <taxon>Proteus</taxon>
    </lineage>
</organism>
<accession>B4ESU7</accession>